<name>RIMK_ECOLI</name>
<proteinExistence type="evidence at protein level"/>
<dbReference type="EC" id="6.3.2.-" evidence="1"/>
<dbReference type="EMBL" id="X15859">
    <property type="protein sequence ID" value="CAA33868.1"/>
    <property type="molecule type" value="Genomic_DNA"/>
</dbReference>
<dbReference type="EMBL" id="U00096">
    <property type="protein sequence ID" value="AAC73939.1"/>
    <property type="molecule type" value="Genomic_DNA"/>
</dbReference>
<dbReference type="EMBL" id="AP009048">
    <property type="protein sequence ID" value="BAA35563.2"/>
    <property type="molecule type" value="Genomic_DNA"/>
</dbReference>
<dbReference type="PIR" id="D64823">
    <property type="entry name" value="D64823"/>
</dbReference>
<dbReference type="RefSeq" id="NP_415373.1">
    <property type="nucleotide sequence ID" value="NC_000913.3"/>
</dbReference>
<dbReference type="RefSeq" id="WP_000684321.1">
    <property type="nucleotide sequence ID" value="NZ_STEB01000019.1"/>
</dbReference>
<dbReference type="PDB" id="4IWX">
    <property type="method" value="X-ray"/>
    <property type="resolution" value="2.85 A"/>
    <property type="chains" value="A=1-300"/>
</dbReference>
<dbReference type="PDB" id="4IWY">
    <property type="method" value="X-ray"/>
    <property type="resolution" value="2.90 A"/>
    <property type="chains" value="A=2-300"/>
</dbReference>
<dbReference type="PDB" id="5ZCT">
    <property type="method" value="X-ray"/>
    <property type="resolution" value="2.05 A"/>
    <property type="chains" value="A/B/C/D/E/F/G/H=1-292"/>
</dbReference>
<dbReference type="PDB" id="5ZK6">
    <property type="method" value="X-ray"/>
    <property type="resolution" value="3.15 A"/>
    <property type="chains" value="A=1-300"/>
</dbReference>
<dbReference type="PDBsum" id="4IWX"/>
<dbReference type="PDBsum" id="4IWY"/>
<dbReference type="PDBsum" id="5ZCT"/>
<dbReference type="PDBsum" id="5ZK6"/>
<dbReference type="SMR" id="P0C0U4"/>
<dbReference type="BioGRID" id="4259992">
    <property type="interactions" value="36"/>
</dbReference>
<dbReference type="FunCoup" id="P0C0U4">
    <property type="interactions" value="305"/>
</dbReference>
<dbReference type="IntAct" id="P0C0U4">
    <property type="interactions" value="4"/>
</dbReference>
<dbReference type="STRING" id="511145.b0852"/>
<dbReference type="jPOST" id="P0C0U4"/>
<dbReference type="PaxDb" id="511145-b0852"/>
<dbReference type="EnsemblBacteria" id="AAC73939">
    <property type="protein sequence ID" value="AAC73939"/>
    <property type="gene ID" value="b0852"/>
</dbReference>
<dbReference type="GeneID" id="93776570"/>
<dbReference type="GeneID" id="945484"/>
<dbReference type="KEGG" id="ecj:JW0836"/>
<dbReference type="KEGG" id="eco:b0852"/>
<dbReference type="KEGG" id="ecoc:C3026_05315"/>
<dbReference type="PATRIC" id="fig|1411691.4.peg.1426"/>
<dbReference type="EchoBASE" id="EB0845"/>
<dbReference type="eggNOG" id="COG0189">
    <property type="taxonomic scope" value="Bacteria"/>
</dbReference>
<dbReference type="HOGENOM" id="CLU_054353_0_1_6"/>
<dbReference type="InParanoid" id="P0C0U4"/>
<dbReference type="OMA" id="CYMNIAS"/>
<dbReference type="OrthoDB" id="3865600at2"/>
<dbReference type="PhylomeDB" id="P0C0U4"/>
<dbReference type="BioCyc" id="EcoCyc:EG10852-MONOMER"/>
<dbReference type="BioCyc" id="MetaCyc:EG10852-MONOMER"/>
<dbReference type="EvolutionaryTrace" id="P0C0U4"/>
<dbReference type="PRO" id="PR:P0C0U4"/>
<dbReference type="Proteomes" id="UP000000625">
    <property type="component" value="Chromosome"/>
</dbReference>
<dbReference type="GO" id="GO:0005737">
    <property type="term" value="C:cytoplasm"/>
    <property type="evidence" value="ECO:0000318"/>
    <property type="project" value="GO_Central"/>
</dbReference>
<dbReference type="GO" id="GO:0005524">
    <property type="term" value="F:ATP binding"/>
    <property type="evidence" value="ECO:0007669"/>
    <property type="project" value="UniProtKB-UniRule"/>
</dbReference>
<dbReference type="GO" id="GO:0042802">
    <property type="term" value="F:identical protein binding"/>
    <property type="evidence" value="ECO:0000314"/>
    <property type="project" value="EcoCyc"/>
</dbReference>
<dbReference type="GO" id="GO:0046872">
    <property type="term" value="F:metal ion binding"/>
    <property type="evidence" value="ECO:0007669"/>
    <property type="project" value="UniProtKB-KW"/>
</dbReference>
<dbReference type="GO" id="GO:0018169">
    <property type="term" value="F:ribosomal S6-glutamic acid ligase activity"/>
    <property type="evidence" value="ECO:0000314"/>
    <property type="project" value="EcoCyc"/>
</dbReference>
<dbReference type="GO" id="GO:0036211">
    <property type="term" value="P:protein modification process"/>
    <property type="evidence" value="ECO:0007669"/>
    <property type="project" value="InterPro"/>
</dbReference>
<dbReference type="GO" id="GO:0009432">
    <property type="term" value="P:SOS response"/>
    <property type="evidence" value="ECO:0000315"/>
    <property type="project" value="EcoCyc"/>
</dbReference>
<dbReference type="GO" id="GO:0006412">
    <property type="term" value="P:translation"/>
    <property type="evidence" value="ECO:0007669"/>
    <property type="project" value="UniProtKB-KW"/>
</dbReference>
<dbReference type="FunFam" id="3.40.50.20:FF:000004">
    <property type="entry name" value="Probable alpha-L-glutamate ligase"/>
    <property type="match status" value="1"/>
</dbReference>
<dbReference type="FunFam" id="3.30.1490.20:FF:000005">
    <property type="entry name" value="Probable alpha-L-glutamate ligase 1"/>
    <property type="match status" value="1"/>
</dbReference>
<dbReference type="FunFam" id="3.30.470.20:FF:000016">
    <property type="entry name" value="Ribosomal protein S6--L-glutamate ligase"/>
    <property type="match status" value="1"/>
</dbReference>
<dbReference type="Gene3D" id="3.40.50.20">
    <property type="match status" value="1"/>
</dbReference>
<dbReference type="Gene3D" id="3.30.1490.20">
    <property type="entry name" value="ATP-grasp fold, A domain"/>
    <property type="match status" value="1"/>
</dbReference>
<dbReference type="Gene3D" id="3.30.470.20">
    <property type="entry name" value="ATP-grasp fold, B domain"/>
    <property type="match status" value="1"/>
</dbReference>
<dbReference type="HAMAP" id="MF_01552">
    <property type="entry name" value="RimK"/>
    <property type="match status" value="1"/>
</dbReference>
<dbReference type="InterPro" id="IPR011761">
    <property type="entry name" value="ATP-grasp"/>
</dbReference>
<dbReference type="InterPro" id="IPR013651">
    <property type="entry name" value="ATP-grasp_RimK-type"/>
</dbReference>
<dbReference type="InterPro" id="IPR013815">
    <property type="entry name" value="ATP_grasp_subdomain_1"/>
</dbReference>
<dbReference type="InterPro" id="IPR023533">
    <property type="entry name" value="RimK"/>
</dbReference>
<dbReference type="InterPro" id="IPR041107">
    <property type="entry name" value="Rimk_N"/>
</dbReference>
<dbReference type="InterPro" id="IPR004666">
    <property type="entry name" value="Rp_bS6_RimK/Lys_biosynth_LsyX"/>
</dbReference>
<dbReference type="NCBIfam" id="NF007764">
    <property type="entry name" value="PRK10446.1"/>
    <property type="match status" value="1"/>
</dbReference>
<dbReference type="NCBIfam" id="TIGR00768">
    <property type="entry name" value="rimK_fam"/>
    <property type="match status" value="1"/>
</dbReference>
<dbReference type="PANTHER" id="PTHR21621:SF7">
    <property type="entry name" value="RIBOSOMAL PROTEIN BS6--L-GLUTAMATE LIGASE"/>
    <property type="match status" value="1"/>
</dbReference>
<dbReference type="PANTHER" id="PTHR21621">
    <property type="entry name" value="RIBOSOMAL PROTEIN S6 MODIFICATION PROTEIN"/>
    <property type="match status" value="1"/>
</dbReference>
<dbReference type="Pfam" id="PF08443">
    <property type="entry name" value="RimK"/>
    <property type="match status" value="1"/>
</dbReference>
<dbReference type="Pfam" id="PF18030">
    <property type="entry name" value="Rimk_N"/>
    <property type="match status" value="1"/>
</dbReference>
<dbReference type="SUPFAM" id="SSF56059">
    <property type="entry name" value="Glutathione synthetase ATP-binding domain-like"/>
    <property type="match status" value="1"/>
</dbReference>
<dbReference type="PROSITE" id="PS50975">
    <property type="entry name" value="ATP_GRASP"/>
    <property type="match status" value="1"/>
</dbReference>
<keyword id="KW-0002">3D-structure</keyword>
<keyword id="KW-0067">ATP-binding</keyword>
<keyword id="KW-0436">Ligase</keyword>
<keyword id="KW-0460">Magnesium</keyword>
<keyword id="KW-0464">Manganese</keyword>
<keyword id="KW-0479">Metal-binding</keyword>
<keyword id="KW-0547">Nucleotide-binding</keyword>
<keyword id="KW-0648">Protein biosynthesis</keyword>
<keyword id="KW-1185">Reference proteome</keyword>
<reference key="1">
    <citation type="journal article" date="1989" name="Mol. Gen. Genet.">
        <title>Characterization of the gene rimK responsible for the addition of glutamic acid residues to the C-terminus of ribosomal protein S6 in Escherichia coli K12.</title>
        <authorList>
            <person name="Kang W.-K."/>
            <person name="Icho T."/>
            <person name="Isono S."/>
            <person name="Kitakawa M."/>
            <person name="Isono K."/>
        </authorList>
    </citation>
    <scope>NUCLEOTIDE SEQUENCE [GENOMIC DNA]</scope>
    <scope>IDENTIFICATION</scope>
    <scope>FUNCTION</scope>
    <source>
        <strain>K12</strain>
    </source>
</reference>
<reference key="2">
    <citation type="journal article" date="1996" name="DNA Res.">
        <title>A 718-kb DNA sequence of the Escherichia coli K-12 genome corresponding to the 12.7-28.0 min region on the linkage map.</title>
        <authorList>
            <person name="Oshima T."/>
            <person name="Aiba H."/>
            <person name="Baba T."/>
            <person name="Fujita K."/>
            <person name="Hayashi K."/>
            <person name="Honjo A."/>
            <person name="Ikemoto K."/>
            <person name="Inada T."/>
            <person name="Itoh T."/>
            <person name="Kajihara M."/>
            <person name="Kanai K."/>
            <person name="Kashimoto K."/>
            <person name="Kimura S."/>
            <person name="Kitagawa M."/>
            <person name="Makino K."/>
            <person name="Masuda S."/>
            <person name="Miki T."/>
            <person name="Mizobuchi K."/>
            <person name="Mori H."/>
            <person name="Motomura K."/>
            <person name="Nakamura Y."/>
            <person name="Nashimoto H."/>
            <person name="Nishio Y."/>
            <person name="Saito N."/>
            <person name="Sampei G."/>
            <person name="Seki Y."/>
            <person name="Tagami H."/>
            <person name="Takemoto K."/>
            <person name="Wada C."/>
            <person name="Yamamoto Y."/>
            <person name="Yano M."/>
            <person name="Horiuchi T."/>
        </authorList>
    </citation>
    <scope>NUCLEOTIDE SEQUENCE [LARGE SCALE GENOMIC DNA]</scope>
    <source>
        <strain>K12 / W3110 / ATCC 27325 / DSM 5911</strain>
    </source>
</reference>
<reference key="3">
    <citation type="journal article" date="1997" name="Science">
        <title>The complete genome sequence of Escherichia coli K-12.</title>
        <authorList>
            <person name="Blattner F.R."/>
            <person name="Plunkett G. III"/>
            <person name="Bloch C.A."/>
            <person name="Perna N.T."/>
            <person name="Burland V."/>
            <person name="Riley M."/>
            <person name="Collado-Vides J."/>
            <person name="Glasner J.D."/>
            <person name="Rode C.K."/>
            <person name="Mayhew G.F."/>
            <person name="Gregor J."/>
            <person name="Davis N.W."/>
            <person name="Kirkpatrick H.A."/>
            <person name="Goeden M.A."/>
            <person name="Rose D.J."/>
            <person name="Mau B."/>
            <person name="Shao Y."/>
        </authorList>
    </citation>
    <scope>NUCLEOTIDE SEQUENCE [LARGE SCALE GENOMIC DNA]</scope>
    <source>
        <strain>K12 / MG1655 / ATCC 47076</strain>
    </source>
</reference>
<reference key="4">
    <citation type="journal article" date="2006" name="Mol. Syst. Biol.">
        <title>Highly accurate genome sequences of Escherichia coli K-12 strains MG1655 and W3110.</title>
        <authorList>
            <person name="Hayashi K."/>
            <person name="Morooka N."/>
            <person name="Yamamoto Y."/>
            <person name="Fujita K."/>
            <person name="Isono K."/>
            <person name="Choi S."/>
            <person name="Ohtsubo E."/>
            <person name="Baba T."/>
            <person name="Wanner B.L."/>
            <person name="Mori H."/>
            <person name="Horiuchi T."/>
        </authorList>
    </citation>
    <scope>NUCLEOTIDE SEQUENCE [LARGE SCALE GENOMIC DNA]</scope>
    <source>
        <strain>K12 / W3110 / ATCC 27325 / DSM 5911</strain>
    </source>
</reference>
<reference key="5">
    <citation type="journal article" date="2011" name="Appl. Environ. Microbiol.">
        <title>Poly-alpha-glutamic acid synthesis using a novel catalytic activity of RimK from Escherichia coli K-12.</title>
        <authorList>
            <person name="Kino K."/>
            <person name="Arai T."/>
            <person name="Arimura Y."/>
        </authorList>
    </citation>
    <scope>FUNCTION</scope>
    <scope>CATALYTIC ACTIVITY</scope>
    <scope>BIOPHYSICOCHEMICAL PROPERTIES</scope>
    <scope>SUBUNIT</scope>
    <scope>BIOTECHNOLOGY</scope>
    <source>
        <strain>K12</strain>
    </source>
</reference>
<reference key="6">
    <citation type="journal article" date="2013" name="Proteins">
        <title>Structure and function of Escherichia coli RimK, an ATP-grasp fold, L-glutamyl ligase enzyme.</title>
        <authorList>
            <person name="Zhao G."/>
            <person name="Jin Z."/>
            <person name="Wang Y."/>
            <person name="Allewell N.M."/>
            <person name="Tuchman M."/>
            <person name="Shi D."/>
        </authorList>
    </citation>
    <scope>X-RAY CRYSTALLOGRAPHY (2.85 ANGSTROMS) IN COMPLEX WITH ADP</scope>
    <scope>SUBUNIT</scope>
</reference>
<comment type="function">
    <text evidence="1 2 3">An L-glutamate ligase that catalyzes the ATP-dependent post-translational addition of glutamate residues to the C-terminus of ribosomal protein bS6 (RpsF). Is also able to catalyze the synthesis of poly-alpha-glutamate in vitro, via ATP hydrolysis from unprotected glutamate as substrate. The number of glutamate residues added to either RpsF or to poly-alpha-glutamate changes with pH.</text>
</comment>
<comment type="cofactor">
    <cofactor evidence="1">
        <name>Mg(2+)</name>
        <dbReference type="ChEBI" id="CHEBI:18420"/>
    </cofactor>
    <cofactor evidence="1">
        <name>Mn(2+)</name>
        <dbReference type="ChEBI" id="CHEBI:29035"/>
    </cofactor>
    <text evidence="1">Binds 2 magnesium or manganese ions per subunit.</text>
</comment>
<comment type="biophysicochemical properties">
    <phDependence>
        <text evidence="2">Optimum pH is 9.5 for RpsF modification and 9 for polyglutamate synthase activity.</text>
    </phDependence>
    <temperatureDependence>
        <text evidence="2">Shows thermal stability. Exhibits 86% activity after incubation at 55 degrees Celsius for 15 minutes, but its activity decreases sharply at 60 degrees Celsius.</text>
    </temperatureDependence>
</comment>
<comment type="biotechnology">
    <text evidence="2">This protein may find application in fermentative methods that use microorganisms overexpressing rimK for mass production of poly-alpha-amino acids, which is thought to be the most economical and ecofriendly manufacturing process.</text>
</comment>
<comment type="similarity">
    <text evidence="1">Belongs to the RimK family.</text>
</comment>
<evidence type="ECO:0000255" key="1">
    <source>
        <dbReference type="HAMAP-Rule" id="MF_01552"/>
    </source>
</evidence>
<evidence type="ECO:0000269" key="2">
    <source>
    </source>
</evidence>
<evidence type="ECO:0000269" key="3">
    <source>
    </source>
</evidence>
<evidence type="ECO:0000305" key="4"/>
<evidence type="ECO:0000305" key="5">
    <source>
    </source>
</evidence>
<evidence type="ECO:0007829" key="6">
    <source>
        <dbReference type="PDB" id="4IWX"/>
    </source>
</evidence>
<evidence type="ECO:0007829" key="7">
    <source>
        <dbReference type="PDB" id="5ZCT"/>
    </source>
</evidence>
<evidence type="ECO:0007829" key="8">
    <source>
        <dbReference type="PDB" id="5ZK6"/>
    </source>
</evidence>
<feature type="chain" id="PRO_0000205455" description="Ribosomal protein bS6--L-glutamate ligase">
    <location>
        <begin position="1"/>
        <end position="300"/>
    </location>
</feature>
<feature type="domain" description="ATP-grasp" evidence="1">
    <location>
        <begin position="104"/>
        <end position="287"/>
    </location>
</feature>
<feature type="binding site" evidence="5">
    <location>
        <position position="141"/>
    </location>
    <ligand>
        <name>ATP</name>
        <dbReference type="ChEBI" id="CHEBI:30616"/>
    </ligand>
</feature>
<feature type="binding site" evidence="5">
    <location>
        <begin position="178"/>
        <end position="179"/>
    </location>
    <ligand>
        <name>ATP</name>
        <dbReference type="ChEBI" id="CHEBI:30616"/>
    </ligand>
</feature>
<feature type="binding site" evidence="5">
    <location>
        <position position="187"/>
    </location>
    <ligand>
        <name>ATP</name>
        <dbReference type="ChEBI" id="CHEBI:30616"/>
    </ligand>
</feature>
<feature type="binding site" evidence="5">
    <location>
        <begin position="211"/>
        <end position="213"/>
    </location>
    <ligand>
        <name>ATP</name>
        <dbReference type="ChEBI" id="CHEBI:30616"/>
    </ligand>
</feature>
<feature type="binding site" evidence="1">
    <location>
        <position position="248"/>
    </location>
    <ligand>
        <name>Mg(2+)</name>
        <dbReference type="ChEBI" id="CHEBI:18420"/>
        <label>1</label>
    </ligand>
</feature>
<feature type="binding site" evidence="1">
    <location>
        <position position="248"/>
    </location>
    <ligand>
        <name>Mn(2+)</name>
        <dbReference type="ChEBI" id="CHEBI:29035"/>
        <label>1</label>
    </ligand>
</feature>
<feature type="binding site" evidence="1">
    <location>
        <position position="260"/>
    </location>
    <ligand>
        <name>Mg(2+)</name>
        <dbReference type="ChEBI" id="CHEBI:18420"/>
        <label>1</label>
    </ligand>
</feature>
<feature type="binding site" evidence="1">
    <location>
        <position position="260"/>
    </location>
    <ligand>
        <name>Mg(2+)</name>
        <dbReference type="ChEBI" id="CHEBI:18420"/>
        <label>2</label>
    </ligand>
</feature>
<feature type="binding site" evidence="1">
    <location>
        <position position="260"/>
    </location>
    <ligand>
        <name>Mn(2+)</name>
        <dbReference type="ChEBI" id="CHEBI:29035"/>
        <label>1</label>
    </ligand>
</feature>
<feature type="binding site" evidence="1">
    <location>
        <position position="260"/>
    </location>
    <ligand>
        <name>Mn(2+)</name>
        <dbReference type="ChEBI" id="CHEBI:29035"/>
        <label>2</label>
    </ligand>
</feature>
<feature type="binding site" evidence="1">
    <location>
        <position position="262"/>
    </location>
    <ligand>
        <name>Mg(2+)</name>
        <dbReference type="ChEBI" id="CHEBI:18420"/>
        <label>2</label>
    </ligand>
</feature>
<feature type="binding site" evidence="1">
    <location>
        <position position="262"/>
    </location>
    <ligand>
        <name>Mn(2+)</name>
        <dbReference type="ChEBI" id="CHEBI:29035"/>
        <label>2</label>
    </ligand>
</feature>
<feature type="sequence conflict" description="In Ref. 1; CAA33868." evidence="4" ref="1">
    <original>MKIAILSRDGTLYSCKRL</original>
    <variation>MERSIRVSGW</variation>
    <location>
        <begin position="1"/>
        <end position="18"/>
    </location>
</feature>
<feature type="strand" evidence="7">
    <location>
        <begin position="2"/>
        <end position="8"/>
    </location>
</feature>
<feature type="strand" evidence="8">
    <location>
        <begin position="10"/>
        <end position="12"/>
    </location>
</feature>
<feature type="helix" evidence="7">
    <location>
        <begin position="13"/>
        <end position="24"/>
    </location>
</feature>
<feature type="strand" evidence="7">
    <location>
        <begin position="28"/>
        <end position="32"/>
    </location>
</feature>
<feature type="helix" evidence="7">
    <location>
        <begin position="34"/>
        <end position="36"/>
    </location>
</feature>
<feature type="strand" evidence="7">
    <location>
        <begin position="37"/>
        <end position="43"/>
    </location>
</feature>
<feature type="strand" evidence="7">
    <location>
        <begin position="48"/>
        <end position="50"/>
    </location>
</feature>
<feature type="strand" evidence="7">
    <location>
        <begin position="59"/>
        <end position="64"/>
    </location>
</feature>
<feature type="helix" evidence="7">
    <location>
        <begin position="67"/>
        <end position="69"/>
    </location>
</feature>
<feature type="helix" evidence="7">
    <location>
        <begin position="70"/>
        <end position="82"/>
    </location>
</feature>
<feature type="strand" evidence="7">
    <location>
        <begin position="86"/>
        <end position="89"/>
    </location>
</feature>
<feature type="helix" evidence="7">
    <location>
        <begin position="91"/>
        <end position="98"/>
    </location>
</feature>
<feature type="helix" evidence="7">
    <location>
        <begin position="100"/>
        <end position="109"/>
    </location>
</feature>
<feature type="strand" evidence="7">
    <location>
        <begin position="117"/>
        <end position="122"/>
    </location>
</feature>
<feature type="helix" evidence="7">
    <location>
        <begin position="126"/>
        <end position="133"/>
    </location>
</feature>
<feature type="strand" evidence="7">
    <location>
        <begin position="135"/>
        <end position="142"/>
    </location>
</feature>
<feature type="turn" evidence="7">
    <location>
        <begin position="147"/>
        <end position="150"/>
    </location>
</feature>
<feature type="strand" evidence="7">
    <location>
        <begin position="151"/>
        <end position="154"/>
    </location>
</feature>
<feature type="helix" evidence="7">
    <location>
        <begin position="157"/>
        <end position="168"/>
    </location>
</feature>
<feature type="helix" evidence="6">
    <location>
        <begin position="170"/>
        <end position="172"/>
    </location>
</feature>
<feature type="strand" evidence="7">
    <location>
        <begin position="174"/>
        <end position="178"/>
    </location>
</feature>
<feature type="helix" evidence="7">
    <location>
        <begin position="181"/>
        <end position="183"/>
    </location>
</feature>
<feature type="strand" evidence="7">
    <location>
        <begin position="186"/>
        <end position="193"/>
    </location>
</feature>
<feature type="strand" evidence="7">
    <location>
        <begin position="196"/>
        <end position="204"/>
    </location>
</feature>
<feature type="strand" evidence="6">
    <location>
        <begin position="207"/>
        <end position="209"/>
    </location>
</feature>
<feature type="helix" evidence="7">
    <location>
        <begin position="214"/>
        <end position="216"/>
    </location>
</feature>
<feature type="strand" evidence="7">
    <location>
        <begin position="219"/>
        <end position="222"/>
    </location>
</feature>
<feature type="helix" evidence="7">
    <location>
        <begin position="227"/>
        <end position="239"/>
    </location>
</feature>
<feature type="strand" evidence="7">
    <location>
        <begin position="243"/>
        <end position="252"/>
    </location>
</feature>
<feature type="strand" evidence="7">
    <location>
        <begin position="255"/>
        <end position="264"/>
    </location>
</feature>
<feature type="helix" evidence="7">
    <location>
        <begin position="268"/>
        <end position="274"/>
    </location>
</feature>
<feature type="helix" evidence="7">
    <location>
        <begin position="278"/>
        <end position="289"/>
    </location>
</feature>
<organism>
    <name type="scientific">Escherichia coli (strain K12)</name>
    <dbReference type="NCBI Taxonomy" id="83333"/>
    <lineage>
        <taxon>Bacteria</taxon>
        <taxon>Pseudomonadati</taxon>
        <taxon>Pseudomonadota</taxon>
        <taxon>Gammaproteobacteria</taxon>
        <taxon>Enterobacterales</taxon>
        <taxon>Enterobacteriaceae</taxon>
        <taxon>Escherichia</taxon>
    </lineage>
</organism>
<gene>
    <name type="primary">rimK</name>
    <name type="ordered locus">b0852</name>
    <name type="ordered locus">JW0836</name>
</gene>
<protein>
    <recommendedName>
        <fullName evidence="1">Ribosomal protein bS6--L-glutamate ligase</fullName>
        <ecNumber evidence="1">6.3.2.-</ecNumber>
    </recommendedName>
    <alternativeName>
        <fullName>Polyglutamate synthase</fullName>
    </alternativeName>
    <alternativeName>
        <fullName evidence="1">Ribosomal protein bS6 modification protein</fullName>
    </alternativeName>
</protein>
<sequence length="300" mass="32436">MKIAILSRDGTLYSCKRLREAAIQRGHLVEILDPLSCYMNINPAASSIHYKGRKLPHFDAVIPRIGTAITFYGTAALRQFEMLGSYPLNESVAIARARDKLRSMQLLARQGIDLPVTGIAHSPDDTSDLIDMVGGAPLVVKLVEGTQGIGVVLAETRQAAESVIDAFRGLNAHILVQEYIKEAQGCDIRCLVVGDEVVAAIERRAKEGDFRSNLHRGGAASVASITPQEREIAIKAARTMALDVAGVDILRANRGPLVMEVNASPGLEGIEKTTGIDIAGKMIRWIERHATTEYCLKTGG</sequence>
<accession>P0C0U4</accession>
<accession>P17116</accession>
<accession>P75814</accession>